<feature type="chain" id="PRO_0000410704" description="Selenoprotein W">
    <location>
        <begin position="1"/>
        <end position="85"/>
    </location>
</feature>
<feature type="non-standard amino acid" description="Selenocysteine" evidence="5">
    <location>
        <position position="13"/>
    </location>
</feature>
<feature type="cross-link" description="Cysteinyl-selenocysteine (Cys-Sec); redox-active" evidence="2">
    <location>
        <begin position="10"/>
        <end position="13"/>
    </location>
</feature>
<protein>
    <recommendedName>
        <fullName evidence="9">Selenoprotein W</fullName>
        <shortName evidence="4">SelW</shortName>
    </recommendedName>
</protein>
<proteinExistence type="evidence at transcript level"/>
<sequence length="85" mass="9472">MPLRVTVLYCGAUGYKPKYERLRAELEKRFPGALEMRGQGTQEVTGWFEVTVGSRLVHSKKNGDGFVDTDAKLQRIVAAIQAALP</sequence>
<comment type="function">
    <text evidence="1">Plays a role as a glutathione (GSH)-dependent antioxidant. May be involved in a redox-related process. May play a role in the myopathies of selenium deficiency (By similarity).</text>
</comment>
<comment type="subcellular location">
    <subcellularLocation>
        <location evidence="3">Cytoplasm</location>
    </subcellularLocation>
</comment>
<comment type="tissue specificity">
    <text evidence="6">Expressed ubiquitously with predominant expression in the pituitary, spinal cord, sciatic nerve, cerebral cortex, cerebral nuclei, thalamus, cerebellum, muscle, cartilage, trachea, gizzard and artery. Weakly expressed in pancreas, testis, ovary, kidney and veins.</text>
</comment>
<comment type="induction">
    <text evidence="6">Up-regulated by dietary selenium in cerebral tissue.</text>
</comment>
<comment type="similarity">
    <text evidence="8">Belongs to the SelWTH family. Selenoprotein W subfamily.</text>
</comment>
<reference evidence="8 9" key="1">
    <citation type="journal article" date="2011" name="Mol. Biol. Rep.">
        <title>Molecular cloning, characterization and mRNA expression analysis of a novel selenoprotein: avian selenoprotein W from chicken.</title>
        <authorList>
            <person name="Li J.L."/>
            <person name="Ruan H.F."/>
            <person name="Li H.X."/>
            <person name="Li S."/>
            <person name="Xu S.W."/>
            <person name="Tang Z.X."/>
        </authorList>
    </citation>
    <scope>NUCLEOTIDE SEQUENCE [MRNA]</scope>
    <scope>TISSUE SPECIFICITY</scope>
    <scope>INDUCTION</scope>
    <source>
        <tissue evidence="6">Brain</tissue>
    </source>
</reference>
<organism>
    <name type="scientific">Gallus gallus</name>
    <name type="common">Chicken</name>
    <dbReference type="NCBI Taxonomy" id="9031"/>
    <lineage>
        <taxon>Eukaryota</taxon>
        <taxon>Metazoa</taxon>
        <taxon>Chordata</taxon>
        <taxon>Craniata</taxon>
        <taxon>Vertebrata</taxon>
        <taxon>Euteleostomi</taxon>
        <taxon>Archelosauria</taxon>
        <taxon>Archosauria</taxon>
        <taxon>Dinosauria</taxon>
        <taxon>Saurischia</taxon>
        <taxon>Theropoda</taxon>
        <taxon>Coelurosauria</taxon>
        <taxon>Aves</taxon>
        <taxon>Neognathae</taxon>
        <taxon>Galloanserae</taxon>
        <taxon>Galliformes</taxon>
        <taxon>Phasianidae</taxon>
        <taxon>Phasianinae</taxon>
        <taxon>Gallus</taxon>
    </lineage>
</organism>
<keyword id="KW-0049">Antioxidant</keyword>
<keyword id="KW-0963">Cytoplasm</keyword>
<keyword id="KW-0676">Redox-active center</keyword>
<keyword id="KW-1185">Reference proteome</keyword>
<keyword id="KW-0712">Selenocysteine</keyword>
<evidence type="ECO:0000250" key="1"/>
<evidence type="ECO:0000250" key="2">
    <source>
        <dbReference type="UniProtKB" id="P25236"/>
    </source>
</evidence>
<evidence type="ECO:0000250" key="3">
    <source>
        <dbReference type="UniProtKB" id="P63301"/>
    </source>
</evidence>
<evidence type="ECO:0000250" key="4">
    <source>
        <dbReference type="UniProtKB" id="P63302"/>
    </source>
</evidence>
<evidence type="ECO:0000255" key="5"/>
<evidence type="ECO:0000269" key="6">
    <source>
    </source>
</evidence>
<evidence type="ECO:0000303" key="7">
    <source>
    </source>
</evidence>
<evidence type="ECO:0000305" key="8"/>
<evidence type="ECO:0000312" key="9">
    <source>
        <dbReference type="EMBL" id="ACX47065.1"/>
    </source>
</evidence>
<name>SELW_CHICK</name>
<gene>
    <name evidence="4" type="primary">SELENOW</name>
    <name evidence="7" type="synonym">SELW</name>
    <name evidence="4" type="synonym">SEPW1</name>
</gene>
<accession>D0EYG3</accession>
<dbReference type="EMBL" id="GQ919055">
    <property type="protein sequence ID" value="ACX47065.1"/>
    <property type="molecule type" value="mRNA"/>
</dbReference>
<dbReference type="RefSeq" id="NP_001159799.1">
    <property type="nucleotide sequence ID" value="NM_001166327.2"/>
</dbReference>
<dbReference type="RefSeq" id="NP_001338303.1">
    <property type="nucleotide sequence ID" value="NM_001351374.1"/>
</dbReference>
<dbReference type="FunCoup" id="D0EYG3">
    <property type="interactions" value="3"/>
</dbReference>
<dbReference type="STRING" id="9031.ENSGALP00000067698"/>
<dbReference type="GeneID" id="100310814"/>
<dbReference type="KEGG" id="gga:100310814"/>
<dbReference type="CTD" id="6415"/>
<dbReference type="VEuPathDB" id="HostDB:geneid_100310814"/>
<dbReference type="InParanoid" id="D0EYG3"/>
<dbReference type="OMA" id="WGYKSKY"/>
<dbReference type="OrthoDB" id="444492at2759"/>
<dbReference type="PhylomeDB" id="D0EYG3"/>
<dbReference type="PRO" id="PR:D0EYG3"/>
<dbReference type="Proteomes" id="UP000000539">
    <property type="component" value="Unassembled WGS sequence"/>
</dbReference>
<dbReference type="GO" id="GO:0005829">
    <property type="term" value="C:cytosol"/>
    <property type="evidence" value="ECO:0000318"/>
    <property type="project" value="GO_Central"/>
</dbReference>
<dbReference type="GO" id="GO:0016209">
    <property type="term" value="F:antioxidant activity"/>
    <property type="evidence" value="ECO:0007669"/>
    <property type="project" value="UniProtKB-KW"/>
</dbReference>
<dbReference type="GO" id="GO:0010269">
    <property type="term" value="P:response to selenium ion"/>
    <property type="evidence" value="ECO:0000318"/>
    <property type="project" value="GO_Central"/>
</dbReference>
<dbReference type="FunFam" id="3.40.30.10:FF:000158">
    <property type="entry name" value="Selenoprotein W"/>
    <property type="match status" value="1"/>
</dbReference>
<dbReference type="Gene3D" id="3.40.30.10">
    <property type="entry name" value="Glutaredoxin"/>
    <property type="match status" value="1"/>
</dbReference>
<dbReference type="InterPro" id="IPR011893">
    <property type="entry name" value="Selenoprotein_Rdx-typ"/>
</dbReference>
<dbReference type="InterPro" id="IPR051441">
    <property type="entry name" value="SelW_related"/>
</dbReference>
<dbReference type="InterPro" id="IPR036249">
    <property type="entry name" value="Thioredoxin-like_sf"/>
</dbReference>
<dbReference type="NCBIfam" id="TIGR02174">
    <property type="entry name" value="CXXU_selWTH"/>
    <property type="match status" value="1"/>
</dbReference>
<dbReference type="PANTHER" id="PTHR15124">
    <property type="entry name" value="SELENOPROTEIN W"/>
    <property type="match status" value="1"/>
</dbReference>
<dbReference type="PANTHER" id="PTHR15124:SF18">
    <property type="entry name" value="SELENOPROTEIN W"/>
    <property type="match status" value="1"/>
</dbReference>
<dbReference type="Pfam" id="PF10262">
    <property type="entry name" value="Rdx"/>
    <property type="match status" value="1"/>
</dbReference>
<dbReference type="SUPFAM" id="SSF52833">
    <property type="entry name" value="Thioredoxin-like"/>
    <property type="match status" value="1"/>
</dbReference>